<proteinExistence type="inferred from homology"/>
<protein>
    <recommendedName>
        <fullName evidence="1">Queuine tRNA-ribosyltransferase</fullName>
        <ecNumber evidence="1">2.4.2.29</ecNumber>
    </recommendedName>
    <alternativeName>
        <fullName evidence="1">Guanine insertion enzyme</fullName>
    </alternativeName>
    <alternativeName>
        <fullName evidence="1">tRNA-guanine transglycosylase</fullName>
    </alternativeName>
</protein>
<accession>C1CGY8</accession>
<name>TGT_STRZJ</name>
<comment type="function">
    <text evidence="1">Catalyzes the base-exchange of a guanine (G) residue with the queuine precursor 7-aminomethyl-7-deazaguanine (PreQ1) at position 34 (anticodon wobble position) in tRNAs with GU(N) anticodons (tRNA-Asp, -Asn, -His and -Tyr). Catalysis occurs through a double-displacement mechanism. The nucleophile active site attacks the C1' of nucleotide 34 to detach the guanine base from the RNA, forming a covalent enzyme-RNA intermediate. The proton acceptor active site deprotonates the incoming PreQ1, allowing a nucleophilic attack on the C1' of the ribose to form the product. After dissociation, two additional enzymatic reactions on the tRNA convert PreQ1 to queuine (Q), resulting in the hypermodified nucleoside queuosine (7-(((4,5-cis-dihydroxy-2-cyclopenten-1-yl)amino)methyl)-7-deazaguanosine).</text>
</comment>
<comment type="catalytic activity">
    <reaction evidence="1">
        <text>7-aminomethyl-7-carbaguanine + guanosine(34) in tRNA = 7-aminomethyl-7-carbaguanosine(34) in tRNA + guanine</text>
        <dbReference type="Rhea" id="RHEA:24104"/>
        <dbReference type="Rhea" id="RHEA-COMP:10341"/>
        <dbReference type="Rhea" id="RHEA-COMP:10342"/>
        <dbReference type="ChEBI" id="CHEBI:16235"/>
        <dbReference type="ChEBI" id="CHEBI:58703"/>
        <dbReference type="ChEBI" id="CHEBI:74269"/>
        <dbReference type="ChEBI" id="CHEBI:82833"/>
        <dbReference type="EC" id="2.4.2.29"/>
    </reaction>
</comment>
<comment type="cofactor">
    <cofactor evidence="1">
        <name>Zn(2+)</name>
        <dbReference type="ChEBI" id="CHEBI:29105"/>
    </cofactor>
    <text evidence="1">Binds 1 zinc ion per subunit.</text>
</comment>
<comment type="pathway">
    <text evidence="1">tRNA modification; tRNA-queuosine biosynthesis.</text>
</comment>
<comment type="subunit">
    <text evidence="1">Homodimer. Within each dimer, one monomer is responsible for RNA recognition and catalysis, while the other monomer binds to the replacement base PreQ1.</text>
</comment>
<comment type="similarity">
    <text evidence="1">Belongs to the queuine tRNA-ribosyltransferase family.</text>
</comment>
<evidence type="ECO:0000255" key="1">
    <source>
        <dbReference type="HAMAP-Rule" id="MF_00168"/>
    </source>
</evidence>
<feature type="chain" id="PRO_1000198028" description="Queuine tRNA-ribosyltransferase">
    <location>
        <begin position="1"/>
        <end position="380"/>
    </location>
</feature>
<feature type="region of interest" description="RNA binding" evidence="1">
    <location>
        <begin position="251"/>
        <end position="257"/>
    </location>
</feature>
<feature type="region of interest" description="RNA binding; important for wobble base 34 recognition" evidence="1">
    <location>
        <begin position="275"/>
        <end position="279"/>
    </location>
</feature>
<feature type="active site" description="Proton acceptor" evidence="1">
    <location>
        <position position="96"/>
    </location>
</feature>
<feature type="active site" description="Nucleophile" evidence="1">
    <location>
        <position position="270"/>
    </location>
</feature>
<feature type="binding site" evidence="1">
    <location>
        <begin position="96"/>
        <end position="100"/>
    </location>
    <ligand>
        <name>substrate</name>
    </ligand>
</feature>
<feature type="binding site" evidence="1">
    <location>
        <position position="150"/>
    </location>
    <ligand>
        <name>substrate</name>
    </ligand>
</feature>
<feature type="binding site" evidence="1">
    <location>
        <position position="193"/>
    </location>
    <ligand>
        <name>substrate</name>
    </ligand>
</feature>
<feature type="binding site" evidence="1">
    <location>
        <position position="220"/>
    </location>
    <ligand>
        <name>substrate</name>
    </ligand>
</feature>
<feature type="binding site" evidence="1">
    <location>
        <position position="308"/>
    </location>
    <ligand>
        <name>Zn(2+)</name>
        <dbReference type="ChEBI" id="CHEBI:29105"/>
    </ligand>
</feature>
<feature type="binding site" evidence="1">
    <location>
        <position position="310"/>
    </location>
    <ligand>
        <name>Zn(2+)</name>
        <dbReference type="ChEBI" id="CHEBI:29105"/>
    </ligand>
</feature>
<feature type="binding site" evidence="1">
    <location>
        <position position="313"/>
    </location>
    <ligand>
        <name>Zn(2+)</name>
        <dbReference type="ChEBI" id="CHEBI:29105"/>
    </ligand>
</feature>
<feature type="binding site" evidence="1">
    <location>
        <position position="339"/>
    </location>
    <ligand>
        <name>Zn(2+)</name>
        <dbReference type="ChEBI" id="CHEBI:29105"/>
    </ligand>
</feature>
<gene>
    <name evidence="1" type="primary">tgt</name>
    <name type="ordered locus">SPJ_2064</name>
</gene>
<sequence length="380" mass="43121">MSDSPIKYRLIKKEKHTGARLGEIITPHGTFPTPMFMPVGTQATVKTQSPEELKEMGSGIILSNTYHLWLRPGDELIARAGGLHKFMNWDQPILTDSGGFQVYSLADSRNITEEGVTFKNHLNGSKMFLSPEKAISIQNNLGSDIMMSFDECPQFYQPYDYVKKSIERTSRWAERGLKAHRRPHDQGLFGIVQGAGFEDLRRQSAHDLVSMDFSGYSIGGLAVGETHEEMNAVLDFTTQLLPENKPRYLMGVGAPDSLIDGVIRGVDMFDCVLPTRIARNGTCMTSQGRLVVKNAQFAEDFTPLDPECDCYTCNNYTRAYLRHLLKADETFGIRLTSYHNLYFLLNLMKQVRQAIMDDNLLEFREYFVEKYGYNKSGRNF</sequence>
<reference key="1">
    <citation type="journal article" date="2010" name="Genome Biol.">
        <title>Structure and dynamics of the pan-genome of Streptococcus pneumoniae and closely related species.</title>
        <authorList>
            <person name="Donati C."/>
            <person name="Hiller N.L."/>
            <person name="Tettelin H."/>
            <person name="Muzzi A."/>
            <person name="Croucher N.J."/>
            <person name="Angiuoli S.V."/>
            <person name="Oggioni M."/>
            <person name="Dunning Hotopp J.C."/>
            <person name="Hu F.Z."/>
            <person name="Riley D.R."/>
            <person name="Covacci A."/>
            <person name="Mitchell T.J."/>
            <person name="Bentley S.D."/>
            <person name="Kilian M."/>
            <person name="Ehrlich G.D."/>
            <person name="Rappuoli R."/>
            <person name="Moxon E.R."/>
            <person name="Masignani V."/>
        </authorList>
    </citation>
    <scope>NUCLEOTIDE SEQUENCE [LARGE SCALE GENOMIC DNA]</scope>
    <source>
        <strain>JJA</strain>
    </source>
</reference>
<keyword id="KW-0328">Glycosyltransferase</keyword>
<keyword id="KW-0479">Metal-binding</keyword>
<keyword id="KW-0671">Queuosine biosynthesis</keyword>
<keyword id="KW-0808">Transferase</keyword>
<keyword id="KW-0819">tRNA processing</keyword>
<keyword id="KW-0862">Zinc</keyword>
<organism>
    <name type="scientific">Streptococcus pneumoniae (strain JJA)</name>
    <dbReference type="NCBI Taxonomy" id="488222"/>
    <lineage>
        <taxon>Bacteria</taxon>
        <taxon>Bacillati</taxon>
        <taxon>Bacillota</taxon>
        <taxon>Bacilli</taxon>
        <taxon>Lactobacillales</taxon>
        <taxon>Streptococcaceae</taxon>
        <taxon>Streptococcus</taxon>
    </lineage>
</organism>
<dbReference type="EC" id="2.4.2.29" evidence="1"/>
<dbReference type="EMBL" id="CP000919">
    <property type="protein sequence ID" value="ACO18975.1"/>
    <property type="molecule type" value="Genomic_DNA"/>
</dbReference>
<dbReference type="RefSeq" id="WP_001285241.1">
    <property type="nucleotide sequence ID" value="NC_012466.1"/>
</dbReference>
<dbReference type="SMR" id="C1CGY8"/>
<dbReference type="KEGG" id="sjj:SPJ_2064"/>
<dbReference type="HOGENOM" id="CLU_022060_0_1_9"/>
<dbReference type="UniPathway" id="UPA00392"/>
<dbReference type="Proteomes" id="UP000002206">
    <property type="component" value="Chromosome"/>
</dbReference>
<dbReference type="GO" id="GO:0005829">
    <property type="term" value="C:cytosol"/>
    <property type="evidence" value="ECO:0007669"/>
    <property type="project" value="TreeGrafter"/>
</dbReference>
<dbReference type="GO" id="GO:0046872">
    <property type="term" value="F:metal ion binding"/>
    <property type="evidence" value="ECO:0007669"/>
    <property type="project" value="UniProtKB-KW"/>
</dbReference>
<dbReference type="GO" id="GO:0008479">
    <property type="term" value="F:tRNA-guanosine(34) queuine transglycosylase activity"/>
    <property type="evidence" value="ECO:0007669"/>
    <property type="project" value="UniProtKB-UniRule"/>
</dbReference>
<dbReference type="GO" id="GO:0008616">
    <property type="term" value="P:queuosine biosynthetic process"/>
    <property type="evidence" value="ECO:0007669"/>
    <property type="project" value="UniProtKB-UniRule"/>
</dbReference>
<dbReference type="GO" id="GO:0002099">
    <property type="term" value="P:tRNA wobble guanine modification"/>
    <property type="evidence" value="ECO:0007669"/>
    <property type="project" value="TreeGrafter"/>
</dbReference>
<dbReference type="GO" id="GO:0101030">
    <property type="term" value="P:tRNA-guanine transglycosylation"/>
    <property type="evidence" value="ECO:0007669"/>
    <property type="project" value="InterPro"/>
</dbReference>
<dbReference type="FunFam" id="3.20.20.105:FF:000001">
    <property type="entry name" value="Queuine tRNA-ribosyltransferase"/>
    <property type="match status" value="1"/>
</dbReference>
<dbReference type="Gene3D" id="3.20.20.105">
    <property type="entry name" value="Queuine tRNA-ribosyltransferase-like"/>
    <property type="match status" value="1"/>
</dbReference>
<dbReference type="HAMAP" id="MF_00168">
    <property type="entry name" value="Q_tRNA_Tgt"/>
    <property type="match status" value="1"/>
</dbReference>
<dbReference type="InterPro" id="IPR050076">
    <property type="entry name" value="ArchSynthase1/Queuine_TRR"/>
</dbReference>
<dbReference type="InterPro" id="IPR004803">
    <property type="entry name" value="TGT"/>
</dbReference>
<dbReference type="InterPro" id="IPR036511">
    <property type="entry name" value="TGT-like_sf"/>
</dbReference>
<dbReference type="InterPro" id="IPR002616">
    <property type="entry name" value="tRNA_ribo_trans-like"/>
</dbReference>
<dbReference type="NCBIfam" id="TIGR00430">
    <property type="entry name" value="Q_tRNA_tgt"/>
    <property type="match status" value="1"/>
</dbReference>
<dbReference type="NCBIfam" id="TIGR00449">
    <property type="entry name" value="tgt_general"/>
    <property type="match status" value="1"/>
</dbReference>
<dbReference type="PANTHER" id="PTHR46499">
    <property type="entry name" value="QUEUINE TRNA-RIBOSYLTRANSFERASE"/>
    <property type="match status" value="1"/>
</dbReference>
<dbReference type="PANTHER" id="PTHR46499:SF1">
    <property type="entry name" value="QUEUINE TRNA-RIBOSYLTRANSFERASE"/>
    <property type="match status" value="1"/>
</dbReference>
<dbReference type="Pfam" id="PF01702">
    <property type="entry name" value="TGT"/>
    <property type="match status" value="1"/>
</dbReference>
<dbReference type="SUPFAM" id="SSF51713">
    <property type="entry name" value="tRNA-guanine transglycosylase"/>
    <property type="match status" value="1"/>
</dbReference>